<comment type="function">
    <text evidence="1">Catalyzes the ATP- as well as the pyrophosphate-dependent phosphorylation of a specific serine residue in HPr, a phosphocarrier protein of the phosphoenolpyruvate-dependent sugar phosphotransferase system (PTS). HprK/P also catalyzes the pyrophosphate-producing, inorganic phosphate-dependent dephosphorylation (phosphorolysis) of seryl-phosphorylated HPr (P-Ser-HPr). The two antagonistic activities of HprK/P are regulated by several intracellular metabolites, which change their concentration in response to the absence or presence of rapidly metabolisable carbon sources (glucose, fructose, etc.) in the growth medium. Therefore, by controlling the phosphorylation state of HPr, HPrK/P is a sensor enzyme that plays a major role in the regulation of carbon metabolism and sugar transport: it mediates carbon catabolite repression (CCR), and regulates PTS-catalyzed carbohydrate uptake and inducer exclusion.</text>
</comment>
<comment type="catalytic activity">
    <reaction evidence="1">
        <text>[HPr protein]-L-serine + ATP = [HPr protein]-O-phospho-L-serine + ADP + H(+)</text>
        <dbReference type="Rhea" id="RHEA:46600"/>
        <dbReference type="Rhea" id="RHEA-COMP:11602"/>
        <dbReference type="Rhea" id="RHEA-COMP:11603"/>
        <dbReference type="ChEBI" id="CHEBI:15378"/>
        <dbReference type="ChEBI" id="CHEBI:29999"/>
        <dbReference type="ChEBI" id="CHEBI:30616"/>
        <dbReference type="ChEBI" id="CHEBI:83421"/>
        <dbReference type="ChEBI" id="CHEBI:456216"/>
    </reaction>
</comment>
<comment type="catalytic activity">
    <reaction evidence="1">
        <text>[HPr protein]-O-phospho-L-serine + phosphate + H(+) = [HPr protein]-L-serine + diphosphate</text>
        <dbReference type="Rhea" id="RHEA:46604"/>
        <dbReference type="Rhea" id="RHEA-COMP:11602"/>
        <dbReference type="Rhea" id="RHEA-COMP:11603"/>
        <dbReference type="ChEBI" id="CHEBI:15378"/>
        <dbReference type="ChEBI" id="CHEBI:29999"/>
        <dbReference type="ChEBI" id="CHEBI:33019"/>
        <dbReference type="ChEBI" id="CHEBI:43474"/>
        <dbReference type="ChEBI" id="CHEBI:83421"/>
    </reaction>
</comment>
<comment type="cofactor">
    <cofactor evidence="1">
        <name>Mg(2+)</name>
        <dbReference type="ChEBI" id="CHEBI:18420"/>
    </cofactor>
</comment>
<comment type="subunit">
    <text evidence="1">Homohexamer.</text>
</comment>
<comment type="domain">
    <text evidence="1">The Walker A ATP-binding motif also binds Pi and PPi.</text>
</comment>
<comment type="miscellaneous">
    <text evidence="1">Both phosphorylation and phosphorolysis are carried out by the same active site and suggest a common mechanism for both reactions.</text>
</comment>
<comment type="similarity">
    <text evidence="1">Belongs to the HPrK/P family.</text>
</comment>
<reference key="1">
    <citation type="journal article" date="2002" name="Mol. Microbiol.">
        <title>Genome sequence of Streptococcus agalactiae, a pathogen causing invasive neonatal disease.</title>
        <authorList>
            <person name="Glaser P."/>
            <person name="Rusniok C."/>
            <person name="Buchrieser C."/>
            <person name="Chevalier F."/>
            <person name="Frangeul L."/>
            <person name="Msadek T."/>
            <person name="Zouine M."/>
            <person name="Couve E."/>
            <person name="Lalioui L."/>
            <person name="Poyart C."/>
            <person name="Trieu-Cuot P."/>
            <person name="Kunst F."/>
        </authorList>
    </citation>
    <scope>NUCLEOTIDE SEQUENCE [LARGE SCALE GENOMIC DNA]</scope>
    <source>
        <strain>NEM316</strain>
    </source>
</reference>
<organism>
    <name type="scientific">Streptococcus agalactiae serotype III (strain NEM316)</name>
    <dbReference type="NCBI Taxonomy" id="211110"/>
    <lineage>
        <taxon>Bacteria</taxon>
        <taxon>Bacillati</taxon>
        <taxon>Bacillota</taxon>
        <taxon>Bacilli</taxon>
        <taxon>Lactobacillales</taxon>
        <taxon>Streptococcaceae</taxon>
        <taxon>Streptococcus</taxon>
    </lineage>
</organism>
<sequence>MAVTVQMLVDRLKLNVIYGDEHLLSKRITTADISRPGLEMTGYFDYYAPERLQLVGMKEWSYLMAMTGHNRYQVLREMFQKETPAIVVARDLEIPEEMYEAAKDTGIAILQSKAPTSRLSGEVSWYLDSCLAERTSVHGVLMDIYGMGVLIQGDSGIGKSETGLELVKRGHRLVADDRVDVYAKDEETLWGEPAEILRHLLEIRGVGIIDIMSLYGASAVKDSSQVQLAIYLENFETGKVFDRLGNGNEEIELSGVKVPRIRIPVKTGRNVSVVIEAAAMNHRAKQMGFDATQTFEDRLTHLISQNEVNDD</sequence>
<keyword id="KW-0067">ATP-binding</keyword>
<keyword id="KW-0119">Carbohydrate metabolism</keyword>
<keyword id="KW-0418">Kinase</keyword>
<keyword id="KW-0460">Magnesium</keyword>
<keyword id="KW-0479">Metal-binding</keyword>
<keyword id="KW-0511">Multifunctional enzyme</keyword>
<keyword id="KW-0547">Nucleotide-binding</keyword>
<keyword id="KW-0723">Serine/threonine-protein kinase</keyword>
<keyword id="KW-0808">Transferase</keyword>
<name>HPRK_STRA3</name>
<dbReference type="EC" id="2.7.11.-" evidence="1"/>
<dbReference type="EC" id="2.7.4.-" evidence="1"/>
<dbReference type="EMBL" id="AL766846">
    <property type="protein sequence ID" value="CAD46401.1"/>
    <property type="molecule type" value="Genomic_DNA"/>
</dbReference>
<dbReference type="RefSeq" id="WP_000301753.1">
    <property type="nucleotide sequence ID" value="NC_004368.1"/>
</dbReference>
<dbReference type="SMR" id="Q8CX28"/>
<dbReference type="GeneID" id="66885689"/>
<dbReference type="KEGG" id="san:ptsK"/>
<dbReference type="eggNOG" id="COG1493">
    <property type="taxonomic scope" value="Bacteria"/>
</dbReference>
<dbReference type="HOGENOM" id="CLU_052030_0_1_9"/>
<dbReference type="Proteomes" id="UP000000823">
    <property type="component" value="Chromosome"/>
</dbReference>
<dbReference type="GO" id="GO:0005524">
    <property type="term" value="F:ATP binding"/>
    <property type="evidence" value="ECO:0007669"/>
    <property type="project" value="UniProtKB-UniRule"/>
</dbReference>
<dbReference type="GO" id="GO:0000287">
    <property type="term" value="F:magnesium ion binding"/>
    <property type="evidence" value="ECO:0007669"/>
    <property type="project" value="UniProtKB-UniRule"/>
</dbReference>
<dbReference type="GO" id="GO:0000155">
    <property type="term" value="F:phosphorelay sensor kinase activity"/>
    <property type="evidence" value="ECO:0007669"/>
    <property type="project" value="InterPro"/>
</dbReference>
<dbReference type="GO" id="GO:0004674">
    <property type="term" value="F:protein serine/threonine kinase activity"/>
    <property type="evidence" value="ECO:0007669"/>
    <property type="project" value="UniProtKB-KW"/>
</dbReference>
<dbReference type="GO" id="GO:0004712">
    <property type="term" value="F:protein serine/threonine/tyrosine kinase activity"/>
    <property type="evidence" value="ECO:0007669"/>
    <property type="project" value="UniProtKB-UniRule"/>
</dbReference>
<dbReference type="GO" id="GO:0006109">
    <property type="term" value="P:regulation of carbohydrate metabolic process"/>
    <property type="evidence" value="ECO:0007669"/>
    <property type="project" value="UniProtKB-UniRule"/>
</dbReference>
<dbReference type="CDD" id="cd01918">
    <property type="entry name" value="HprK_C"/>
    <property type="match status" value="1"/>
</dbReference>
<dbReference type="FunFam" id="3.40.50.300:FF:000174">
    <property type="entry name" value="HPr kinase/phosphorylase"/>
    <property type="match status" value="1"/>
</dbReference>
<dbReference type="Gene3D" id="3.40.1390.20">
    <property type="entry name" value="HprK N-terminal domain-like"/>
    <property type="match status" value="1"/>
</dbReference>
<dbReference type="Gene3D" id="3.40.50.300">
    <property type="entry name" value="P-loop containing nucleotide triphosphate hydrolases"/>
    <property type="match status" value="1"/>
</dbReference>
<dbReference type="HAMAP" id="MF_01249">
    <property type="entry name" value="HPr_kinase"/>
    <property type="match status" value="1"/>
</dbReference>
<dbReference type="InterPro" id="IPR003755">
    <property type="entry name" value="HPr(Ser)_kin/Pase"/>
</dbReference>
<dbReference type="InterPro" id="IPR011104">
    <property type="entry name" value="Hpr_kin/Pase_C"/>
</dbReference>
<dbReference type="InterPro" id="IPR011126">
    <property type="entry name" value="Hpr_kin/Pase_Hpr_N"/>
</dbReference>
<dbReference type="InterPro" id="IPR027417">
    <property type="entry name" value="P-loop_NTPase"/>
</dbReference>
<dbReference type="InterPro" id="IPR028979">
    <property type="entry name" value="Ser_kin/Pase_Hpr-like_N_sf"/>
</dbReference>
<dbReference type="NCBIfam" id="TIGR00679">
    <property type="entry name" value="hpr-ser"/>
    <property type="match status" value="1"/>
</dbReference>
<dbReference type="PANTHER" id="PTHR30305:SF1">
    <property type="entry name" value="HPR KINASE_PHOSPHORYLASE"/>
    <property type="match status" value="1"/>
</dbReference>
<dbReference type="PANTHER" id="PTHR30305">
    <property type="entry name" value="PROTEIN YJDM-RELATED"/>
    <property type="match status" value="1"/>
</dbReference>
<dbReference type="Pfam" id="PF07475">
    <property type="entry name" value="Hpr_kinase_C"/>
    <property type="match status" value="1"/>
</dbReference>
<dbReference type="Pfam" id="PF02603">
    <property type="entry name" value="Hpr_kinase_N"/>
    <property type="match status" value="1"/>
</dbReference>
<dbReference type="SUPFAM" id="SSF75138">
    <property type="entry name" value="HprK N-terminal domain-like"/>
    <property type="match status" value="1"/>
</dbReference>
<dbReference type="SUPFAM" id="SSF53795">
    <property type="entry name" value="PEP carboxykinase-like"/>
    <property type="match status" value="1"/>
</dbReference>
<protein>
    <recommendedName>
        <fullName evidence="1">HPr kinase/phosphorylase</fullName>
        <shortName evidence="1">HPrK/P</shortName>
        <ecNumber evidence="1">2.7.11.-</ecNumber>
        <ecNumber evidence="1">2.7.4.-</ecNumber>
    </recommendedName>
    <alternativeName>
        <fullName evidence="1">HPr(Ser) kinase/phosphorylase</fullName>
    </alternativeName>
</protein>
<proteinExistence type="inferred from homology"/>
<feature type="chain" id="PRO_0000058992" description="HPr kinase/phosphorylase">
    <location>
        <begin position="1"/>
        <end position="311"/>
    </location>
</feature>
<feature type="region of interest" description="Important for the catalytic mechanism of both phosphorylation and dephosphorylation" evidence="1">
    <location>
        <begin position="201"/>
        <end position="210"/>
    </location>
</feature>
<feature type="region of interest" description="Important for the catalytic mechanism of dephosphorylation" evidence="1">
    <location>
        <begin position="264"/>
        <end position="269"/>
    </location>
</feature>
<feature type="active site" evidence="1">
    <location>
        <position position="138"/>
    </location>
</feature>
<feature type="active site" evidence="1">
    <location>
        <position position="159"/>
    </location>
</feature>
<feature type="active site" description="Proton acceptor; for phosphorylation activity. Proton donor; for dephosphorylation activity" evidence="1">
    <location>
        <position position="177"/>
    </location>
</feature>
<feature type="active site" evidence="1">
    <location>
        <position position="243"/>
    </location>
</feature>
<feature type="binding site" evidence="1">
    <location>
        <begin position="153"/>
        <end position="160"/>
    </location>
    <ligand>
        <name>ATP</name>
        <dbReference type="ChEBI" id="CHEBI:30616"/>
    </ligand>
</feature>
<feature type="binding site" evidence="1">
    <location>
        <position position="160"/>
    </location>
    <ligand>
        <name>Mg(2+)</name>
        <dbReference type="ChEBI" id="CHEBI:18420"/>
    </ligand>
</feature>
<feature type="binding site" evidence="1">
    <location>
        <position position="202"/>
    </location>
    <ligand>
        <name>Mg(2+)</name>
        <dbReference type="ChEBI" id="CHEBI:18420"/>
    </ligand>
</feature>
<accession>Q8CX28</accession>
<evidence type="ECO:0000255" key="1">
    <source>
        <dbReference type="HAMAP-Rule" id="MF_01249"/>
    </source>
</evidence>
<gene>
    <name evidence="1" type="primary">hprK</name>
    <name type="synonym">ptsK</name>
    <name type="ordered locus">gbs0757</name>
</gene>